<organism>
    <name type="scientific">Chlamydomonas reinhardtii</name>
    <name type="common">Chlamydomonas smithii</name>
    <dbReference type="NCBI Taxonomy" id="3055"/>
    <lineage>
        <taxon>Eukaryota</taxon>
        <taxon>Viridiplantae</taxon>
        <taxon>Chlorophyta</taxon>
        <taxon>core chlorophytes</taxon>
        <taxon>Chlorophyceae</taxon>
        <taxon>CS clade</taxon>
        <taxon>Chlamydomonadales</taxon>
        <taxon>Chlamydomonadaceae</taxon>
        <taxon>Chlamydomonas</taxon>
    </lineage>
</organism>
<proteinExistence type="evidence at protein level"/>
<sequence length="345" mass="38836">MATAMDTGAGASAPAVPQGDRTSADYYFDSYSHFGIHEEMLKDSVRTRTYMNAILNNAYLFKDKIVLDIGCGTGILSLFSAKAGAKHVYGIECSTIAEQATQIVKDNKFDDRVTIIKGKVEEVTLPVDKVDIIISEWMGYFLFYESMLDTVIYARDKWLVPGGIIMPDKATLSLCAIEDGEYKHDKIEFWDNVYGFNMSCIKQLAIAEPLVDIVEPDQIASTIQTVVSVDISTMKKEDATFTVPYELTMTRNDYVHALVGFFDVSFTRGHKPLSFTTSPRARATHWKQTVFYLEDTLMASKDETISGKLECKPNAKNPRDLDISIAYEFEGERGQVKNTQQYRMR</sequence>
<evidence type="ECO:0000250" key="1">
    <source>
        <dbReference type="UniProtKB" id="P38074"/>
    </source>
</evidence>
<evidence type="ECO:0000250" key="2">
    <source>
        <dbReference type="UniProtKB" id="Q63009"/>
    </source>
</evidence>
<evidence type="ECO:0000255" key="3">
    <source>
        <dbReference type="PROSITE-ProRule" id="PRU01015"/>
    </source>
</evidence>
<evidence type="ECO:0000269" key="4">
    <source>
    </source>
</evidence>
<evidence type="ECO:0000305" key="5"/>
<evidence type="ECO:0000305" key="6">
    <source>
    </source>
</evidence>
<evidence type="ECO:0000312" key="7">
    <source>
        <dbReference type="EMBL" id="EDP05986.1"/>
    </source>
</evidence>
<gene>
    <name type="primary">PRMT1</name>
    <name evidence="7" type="ORF">CHLREDRAFT_205758</name>
</gene>
<reference key="1">
    <citation type="journal article" date="2003" name="J. Eukaryot. Microbiol.">
        <title>Analysis of Chlamydomonas reinhardtii genome structure using large-scale sequencing of regions on linkage groups I and III.</title>
        <authorList>
            <person name="Li J.B."/>
            <person name="Lin S."/>
            <person name="Jia H."/>
            <person name="Wu H."/>
            <person name="Roe B.A."/>
            <person name="Kulp D."/>
            <person name="Stormo G.D."/>
            <person name="Dutcher S.K."/>
        </authorList>
    </citation>
    <scope>NUCLEOTIDE SEQUENCE [GENOMIC DNA]</scope>
</reference>
<reference key="2">
    <citation type="journal article" date="2007" name="Science">
        <title>The Chlamydomonas genome reveals the evolution of key animal and plant functions.</title>
        <authorList>
            <person name="Merchant S.S."/>
            <person name="Prochnik S.E."/>
            <person name="Vallon O."/>
            <person name="Harris E.H."/>
            <person name="Karpowicz S.J."/>
            <person name="Witman G.B."/>
            <person name="Terry A."/>
            <person name="Salamov A."/>
            <person name="Fritz-Laylin L.K."/>
            <person name="Marechal-Drouard L."/>
            <person name="Marshall W.F."/>
            <person name="Qu L.H."/>
            <person name="Nelson D.R."/>
            <person name="Sanderfoot A.A."/>
            <person name="Spalding M.H."/>
            <person name="Kapitonov V.V."/>
            <person name="Ren Q."/>
            <person name="Ferris P."/>
            <person name="Lindquist E."/>
            <person name="Shapiro H."/>
            <person name="Lucas S.M."/>
            <person name="Grimwood J."/>
            <person name="Schmutz J."/>
            <person name="Cardol P."/>
            <person name="Cerutti H."/>
            <person name="Chanfreau G."/>
            <person name="Chen C.L."/>
            <person name="Cognat V."/>
            <person name="Croft M.T."/>
            <person name="Dent R."/>
            <person name="Dutcher S."/>
            <person name="Fernandez E."/>
            <person name="Fukuzawa H."/>
            <person name="Gonzalez-Ballester D."/>
            <person name="Gonzalez-Halphen D."/>
            <person name="Hallmann A."/>
            <person name="Hanikenne M."/>
            <person name="Hippler M."/>
            <person name="Inwood W."/>
            <person name="Jabbari K."/>
            <person name="Kalanon M."/>
            <person name="Kuras R."/>
            <person name="Lefebvre P.A."/>
            <person name="Lemaire S.D."/>
            <person name="Lobanov A.V."/>
            <person name="Lohr M."/>
            <person name="Manuell A."/>
            <person name="Meier I."/>
            <person name="Mets L."/>
            <person name="Mittag M."/>
            <person name="Mittelmeier T."/>
            <person name="Moroney J.V."/>
            <person name="Moseley J."/>
            <person name="Napoli C."/>
            <person name="Nedelcu A.M."/>
            <person name="Niyogi K."/>
            <person name="Novoselov S.V."/>
            <person name="Paulsen I.T."/>
            <person name="Pazour G.J."/>
            <person name="Purton S."/>
            <person name="Ral J.P."/>
            <person name="Riano-Pachon D.M."/>
            <person name="Riekhof W."/>
            <person name="Rymarquis L."/>
            <person name="Schroda M."/>
            <person name="Stern D."/>
            <person name="Umen J."/>
            <person name="Willows R."/>
            <person name="Wilson N."/>
            <person name="Zimmer S.L."/>
            <person name="Allmer J."/>
            <person name="Balk J."/>
            <person name="Bisova K."/>
            <person name="Chen C.J."/>
            <person name="Elias M."/>
            <person name="Gendler K."/>
            <person name="Hauser C."/>
            <person name="Lamb M.R."/>
            <person name="Ledford H."/>
            <person name="Long J.C."/>
            <person name="Minagawa J."/>
            <person name="Page M.D."/>
            <person name="Pan J."/>
            <person name="Pootakham W."/>
            <person name="Roje S."/>
            <person name="Rose A."/>
            <person name="Stahlberg E."/>
            <person name="Terauchi A.M."/>
            <person name="Yang P."/>
            <person name="Ball S."/>
            <person name="Bowler C."/>
            <person name="Dieckmann C.L."/>
            <person name="Gladyshev V.N."/>
            <person name="Green P."/>
            <person name="Jorgensen R."/>
            <person name="Mayfield S."/>
            <person name="Mueller-Roeber B."/>
            <person name="Rajamani S."/>
            <person name="Sayre R.T."/>
            <person name="Brokstein P."/>
            <person name="Dubchak I."/>
            <person name="Goodstein D."/>
            <person name="Hornick L."/>
            <person name="Huang Y.W."/>
            <person name="Jhaveri J."/>
            <person name="Luo Y."/>
            <person name="Martinez D."/>
            <person name="Ngau W.C."/>
            <person name="Otillar B."/>
            <person name="Poliakov A."/>
            <person name="Porter A."/>
            <person name="Szajkowski L."/>
            <person name="Werner G."/>
            <person name="Zhou K."/>
            <person name="Grigoriev I.V."/>
            <person name="Rokhsar D.S."/>
            <person name="Grossman A.R."/>
        </authorList>
    </citation>
    <scope>NUCLEOTIDE SEQUENCE [LARGE SCALE GENOMIC DNA]</scope>
    <source>
        <strain>CC-503</strain>
        <strain>cw92</strain>
    </source>
</reference>
<reference key="3">
    <citation type="journal article" date="2013" name="Biochemistry">
        <title>Methylation of structural components of the axoneme occurs during flagellar disassembly.</title>
        <authorList>
            <person name="Werner-Peterson R."/>
            <person name="Sloboda R.D."/>
        </authorList>
    </citation>
    <scope>FUNCTION</scope>
    <scope>SUBCELLULAR LOCATION</scope>
    <scope>PHOSPHORYLATION</scope>
</reference>
<comment type="function">
    <text evidence="6">Arginine methyltransferase that methylates (mono and asymmetric dimethylation) the guanidino nitrogens of arginyl residues present in target proteins. Mediates asymmetric dimethylation of components of the axoneme during flagellum resorption, such as CCDC40/FAP172, CCDC65/FAP250, RSP1, RSP2, RPS5, RSP6, and tektin (PubMed:24152136).</text>
</comment>
<comment type="catalytic activity">
    <reaction evidence="1">
        <text>L-arginyl-[protein] + S-adenosyl-L-methionine = N(omega)-methyl-L-arginyl-[protein] + S-adenosyl-L-homocysteine + H(+)</text>
        <dbReference type="Rhea" id="RHEA:48100"/>
        <dbReference type="Rhea" id="RHEA-COMP:10532"/>
        <dbReference type="Rhea" id="RHEA-COMP:11990"/>
        <dbReference type="ChEBI" id="CHEBI:15378"/>
        <dbReference type="ChEBI" id="CHEBI:29965"/>
        <dbReference type="ChEBI" id="CHEBI:57856"/>
        <dbReference type="ChEBI" id="CHEBI:59789"/>
        <dbReference type="ChEBI" id="CHEBI:65280"/>
    </reaction>
    <physiologicalReaction direction="left-to-right" evidence="1">
        <dbReference type="Rhea" id="RHEA:48101"/>
    </physiologicalReaction>
</comment>
<comment type="catalytic activity">
    <reaction evidence="1">
        <text>L-arginyl-[protein] + 2 S-adenosyl-L-methionine = N(omega),N(omega)-dimethyl-L-arginyl-[protein] + 2 S-adenosyl-L-homocysteine + 2 H(+)</text>
        <dbReference type="Rhea" id="RHEA:48096"/>
        <dbReference type="Rhea" id="RHEA-COMP:10532"/>
        <dbReference type="Rhea" id="RHEA-COMP:11991"/>
        <dbReference type="ChEBI" id="CHEBI:15378"/>
        <dbReference type="ChEBI" id="CHEBI:29965"/>
        <dbReference type="ChEBI" id="CHEBI:57856"/>
        <dbReference type="ChEBI" id="CHEBI:59789"/>
        <dbReference type="ChEBI" id="CHEBI:61897"/>
        <dbReference type="EC" id="2.1.1.319"/>
    </reaction>
    <physiologicalReaction direction="left-to-right" evidence="1">
        <dbReference type="Rhea" id="RHEA:48097"/>
    </physiologicalReaction>
</comment>
<comment type="subcellular location">
    <subcellularLocation>
        <location evidence="4">Nucleus</location>
    </subcellularLocation>
    <subcellularLocation>
        <location evidence="4">Cell projection</location>
        <location evidence="4">Cilium</location>
        <location evidence="4">Flagellum</location>
    </subcellularLocation>
    <text evidence="4">Localizes to the flagellum in a punctate pattern along the length of the axoneme. During resorption, localization is enhanced at the flagellar tip, the site of the disassembly of the flagellar axoneme.</text>
</comment>
<comment type="PTM">
    <text evidence="4">Phosphorylated during flagellum resorption.</text>
</comment>
<comment type="similarity">
    <text evidence="3">Belongs to the class I-like SAM-binding methyltransferase superfamily. Protein arginine N-methyltransferase family.</text>
</comment>
<feature type="chain" id="PRO_0000431955" description="Protein arginine N-methyltransferase 1">
    <location>
        <begin position="1"/>
        <end position="345"/>
    </location>
</feature>
<feature type="domain" description="SAM-dependent MTase PRMT-type" evidence="3">
    <location>
        <begin position="24"/>
        <end position="345"/>
    </location>
</feature>
<feature type="active site" evidence="2">
    <location>
        <position position="136"/>
    </location>
</feature>
<feature type="active site" evidence="2">
    <location>
        <position position="145"/>
    </location>
</feature>
<feature type="binding site" evidence="2">
    <location>
        <position position="37"/>
    </location>
    <ligand>
        <name>S-adenosyl-L-methionine</name>
        <dbReference type="ChEBI" id="CHEBI:59789"/>
    </ligand>
</feature>
<feature type="binding site" evidence="2">
    <location>
        <position position="46"/>
    </location>
    <ligand>
        <name>S-adenosyl-L-methionine</name>
        <dbReference type="ChEBI" id="CHEBI:59789"/>
    </ligand>
</feature>
<feature type="binding site" evidence="2">
    <location>
        <position position="70"/>
    </location>
    <ligand>
        <name>S-adenosyl-L-methionine</name>
        <dbReference type="ChEBI" id="CHEBI:59789"/>
    </ligand>
</feature>
<feature type="binding site" evidence="2">
    <location>
        <position position="92"/>
    </location>
    <ligand>
        <name>S-adenosyl-L-methionine</name>
        <dbReference type="ChEBI" id="CHEBI:59789"/>
    </ligand>
</feature>
<feature type="binding site" evidence="2">
    <location>
        <position position="121"/>
    </location>
    <ligand>
        <name>S-adenosyl-L-methionine</name>
        <dbReference type="ChEBI" id="CHEBI:59789"/>
    </ligand>
</feature>
<feature type="sequence conflict" description="In Ref. 1; AAO32621." evidence="5" ref="1">
    <location>
        <begin position="120"/>
        <end position="122"/>
    </location>
</feature>
<accession>A8IEF3</accession>
<accession>Q84X73</accession>
<dbReference type="EC" id="2.1.1.319" evidence="1"/>
<dbReference type="EMBL" id="AY207498">
    <property type="protein sequence ID" value="AAO32621.1"/>
    <property type="molecule type" value="Genomic_DNA"/>
</dbReference>
<dbReference type="EMBL" id="DS496116">
    <property type="protein sequence ID" value="EDP05986.1"/>
    <property type="molecule type" value="Genomic_DNA"/>
</dbReference>
<dbReference type="RefSeq" id="XP_001703304.1">
    <property type="nucleotide sequence ID" value="XM_001703252.1"/>
</dbReference>
<dbReference type="SMR" id="A8IEF3"/>
<dbReference type="PaxDb" id="3055-EDP05986"/>
<dbReference type="EnsemblPlants" id="PNW85120">
    <property type="protein sequence ID" value="PNW85120"/>
    <property type="gene ID" value="CHLRE_03g172550v5"/>
</dbReference>
<dbReference type="GeneID" id="5728909"/>
<dbReference type="Gramene" id="PNW85120">
    <property type="protein sequence ID" value="PNW85120"/>
    <property type="gene ID" value="CHLRE_03g172550v5"/>
</dbReference>
<dbReference type="KEGG" id="cre:CHLRE_03g172550v5"/>
<dbReference type="eggNOG" id="KOG1499">
    <property type="taxonomic scope" value="Eukaryota"/>
</dbReference>
<dbReference type="HOGENOM" id="CLU_017375_1_2_1"/>
<dbReference type="OrthoDB" id="7848332at2759"/>
<dbReference type="GO" id="GO:0031514">
    <property type="term" value="C:motile cilium"/>
    <property type="evidence" value="ECO:0007669"/>
    <property type="project" value="UniProtKB-SubCell"/>
</dbReference>
<dbReference type="GO" id="GO:0005634">
    <property type="term" value="C:nucleus"/>
    <property type="evidence" value="ECO:0007669"/>
    <property type="project" value="UniProtKB-SubCell"/>
</dbReference>
<dbReference type="GO" id="GO:0035242">
    <property type="term" value="F:protein-arginine omega-N asymmetric methyltransferase activity"/>
    <property type="evidence" value="ECO:0007669"/>
    <property type="project" value="RHEA"/>
</dbReference>
<dbReference type="GO" id="GO:0035241">
    <property type="term" value="F:protein-arginine omega-N monomethyltransferase activity"/>
    <property type="evidence" value="ECO:0007669"/>
    <property type="project" value="RHEA"/>
</dbReference>
<dbReference type="GO" id="GO:0032259">
    <property type="term" value="P:methylation"/>
    <property type="evidence" value="ECO:0007669"/>
    <property type="project" value="UniProtKB-KW"/>
</dbReference>
<dbReference type="CDD" id="cd02440">
    <property type="entry name" value="AdoMet_MTases"/>
    <property type="match status" value="1"/>
</dbReference>
<dbReference type="FunFam" id="2.70.160.11:FF:000001">
    <property type="entry name" value="Blast:Protein arginine N-methyltransferase 1"/>
    <property type="match status" value="1"/>
</dbReference>
<dbReference type="FunFam" id="3.40.50.150:FF:000116">
    <property type="entry name" value="probable protein arginine N-methyltransferase 1"/>
    <property type="match status" value="1"/>
</dbReference>
<dbReference type="Gene3D" id="2.70.160.11">
    <property type="entry name" value="Hnrnp arginine n-methyltransferase1"/>
    <property type="match status" value="1"/>
</dbReference>
<dbReference type="Gene3D" id="3.40.50.150">
    <property type="entry name" value="Vaccinia Virus protein VP39"/>
    <property type="match status" value="1"/>
</dbReference>
<dbReference type="InterPro" id="IPR025799">
    <property type="entry name" value="Arg_MeTrfase"/>
</dbReference>
<dbReference type="InterPro" id="IPR041698">
    <property type="entry name" value="Methyltransf_25"/>
</dbReference>
<dbReference type="InterPro" id="IPR055135">
    <property type="entry name" value="PRMT_dom"/>
</dbReference>
<dbReference type="InterPro" id="IPR029063">
    <property type="entry name" value="SAM-dependent_MTases_sf"/>
</dbReference>
<dbReference type="PANTHER" id="PTHR11006">
    <property type="entry name" value="PROTEIN ARGININE N-METHYLTRANSFERASE"/>
    <property type="match status" value="1"/>
</dbReference>
<dbReference type="PANTHER" id="PTHR11006:SF53">
    <property type="entry name" value="PROTEIN ARGININE N-METHYLTRANSFERASE 3"/>
    <property type="match status" value="1"/>
</dbReference>
<dbReference type="Pfam" id="PF13649">
    <property type="entry name" value="Methyltransf_25"/>
    <property type="match status" value="1"/>
</dbReference>
<dbReference type="Pfam" id="PF22528">
    <property type="entry name" value="PRMT_C"/>
    <property type="match status" value="1"/>
</dbReference>
<dbReference type="SUPFAM" id="SSF53335">
    <property type="entry name" value="S-adenosyl-L-methionine-dependent methyltransferases"/>
    <property type="match status" value="1"/>
</dbReference>
<dbReference type="PROSITE" id="PS51678">
    <property type="entry name" value="SAM_MT_PRMT"/>
    <property type="match status" value="1"/>
</dbReference>
<protein>
    <recommendedName>
        <fullName evidence="5">Protein arginine N-methyltransferase 1</fullName>
        <ecNumber evidence="1">2.1.1.319</ecNumber>
    </recommendedName>
</protein>
<keyword id="KW-0966">Cell projection</keyword>
<keyword id="KW-0969">Cilium</keyword>
<keyword id="KW-0282">Flagellum</keyword>
<keyword id="KW-0489">Methyltransferase</keyword>
<keyword id="KW-0539">Nucleus</keyword>
<keyword id="KW-0597">Phosphoprotein</keyword>
<keyword id="KW-0949">S-adenosyl-L-methionine</keyword>
<keyword id="KW-0808">Transferase</keyword>
<name>ANM1_CHLRE</name>